<protein>
    <recommendedName>
        <fullName evidence="1">DNA-directed RNA polymerase subunit omega</fullName>
        <shortName evidence="1">RNAP omega subunit</shortName>
        <ecNumber evidence="1">2.7.7.6</ecNumber>
    </recommendedName>
    <alternativeName>
        <fullName evidence="1">RNA polymerase omega subunit</fullName>
    </alternativeName>
    <alternativeName>
        <fullName evidence="1">Transcriptase subunit omega</fullName>
    </alternativeName>
</protein>
<accession>A8GLH0</accession>
<keyword id="KW-0240">DNA-directed RNA polymerase</keyword>
<keyword id="KW-0548">Nucleotidyltransferase</keyword>
<keyword id="KW-0804">Transcription</keyword>
<keyword id="KW-0808">Transferase</keyword>
<dbReference type="EC" id="2.7.7.6" evidence="1"/>
<dbReference type="EMBL" id="CP000826">
    <property type="protein sequence ID" value="ABV43960.1"/>
    <property type="molecule type" value="Genomic_DNA"/>
</dbReference>
<dbReference type="SMR" id="A8GLH0"/>
<dbReference type="STRING" id="399741.Spro_4868"/>
<dbReference type="KEGG" id="spe:Spro_4868"/>
<dbReference type="eggNOG" id="COG1758">
    <property type="taxonomic scope" value="Bacteria"/>
</dbReference>
<dbReference type="HOGENOM" id="CLU_125406_5_3_6"/>
<dbReference type="OrthoDB" id="9796300at2"/>
<dbReference type="GO" id="GO:0000428">
    <property type="term" value="C:DNA-directed RNA polymerase complex"/>
    <property type="evidence" value="ECO:0007669"/>
    <property type="project" value="UniProtKB-KW"/>
</dbReference>
<dbReference type="GO" id="GO:0003677">
    <property type="term" value="F:DNA binding"/>
    <property type="evidence" value="ECO:0007669"/>
    <property type="project" value="UniProtKB-UniRule"/>
</dbReference>
<dbReference type="GO" id="GO:0003899">
    <property type="term" value="F:DNA-directed RNA polymerase activity"/>
    <property type="evidence" value="ECO:0007669"/>
    <property type="project" value="UniProtKB-UniRule"/>
</dbReference>
<dbReference type="GO" id="GO:0006351">
    <property type="term" value="P:DNA-templated transcription"/>
    <property type="evidence" value="ECO:0007669"/>
    <property type="project" value="UniProtKB-UniRule"/>
</dbReference>
<dbReference type="FunFam" id="3.90.940.10:FF:000001">
    <property type="entry name" value="DNA-directed RNA polymerase subunit omega"/>
    <property type="match status" value="1"/>
</dbReference>
<dbReference type="Gene3D" id="3.90.940.10">
    <property type="match status" value="1"/>
</dbReference>
<dbReference type="HAMAP" id="MF_00366">
    <property type="entry name" value="RNApol_bact_RpoZ"/>
    <property type="match status" value="1"/>
</dbReference>
<dbReference type="InterPro" id="IPR003716">
    <property type="entry name" value="DNA-dir_RNA_pol_omega"/>
</dbReference>
<dbReference type="InterPro" id="IPR006110">
    <property type="entry name" value="Pol_omega/Rpo6/RPB6"/>
</dbReference>
<dbReference type="InterPro" id="IPR036161">
    <property type="entry name" value="RPB6/omega-like_sf"/>
</dbReference>
<dbReference type="NCBIfam" id="TIGR00690">
    <property type="entry name" value="rpoZ"/>
    <property type="match status" value="1"/>
</dbReference>
<dbReference type="PANTHER" id="PTHR34476">
    <property type="entry name" value="DNA-DIRECTED RNA POLYMERASE SUBUNIT OMEGA"/>
    <property type="match status" value="1"/>
</dbReference>
<dbReference type="PANTHER" id="PTHR34476:SF1">
    <property type="entry name" value="DNA-DIRECTED RNA POLYMERASE SUBUNIT OMEGA"/>
    <property type="match status" value="1"/>
</dbReference>
<dbReference type="Pfam" id="PF01192">
    <property type="entry name" value="RNA_pol_Rpb6"/>
    <property type="match status" value="1"/>
</dbReference>
<dbReference type="SMART" id="SM01409">
    <property type="entry name" value="RNA_pol_Rpb6"/>
    <property type="match status" value="1"/>
</dbReference>
<dbReference type="SUPFAM" id="SSF63562">
    <property type="entry name" value="RPB6/omega subunit-like"/>
    <property type="match status" value="1"/>
</dbReference>
<sequence length="91" mass="10202">MARVTVQDAVEKIGNRFDLVLVAARRARQIQTGGKDALVPEENDKYTVIALREIEEGLITSQILDVRDRQEQQEQEAAEIQAVTAIAEGRR</sequence>
<proteinExistence type="inferred from homology"/>
<comment type="function">
    <text evidence="1">Promotes RNA polymerase assembly. Latches the N- and C-terminal regions of the beta' subunit thereby facilitating its interaction with the beta and alpha subunits.</text>
</comment>
<comment type="catalytic activity">
    <reaction evidence="1">
        <text>RNA(n) + a ribonucleoside 5'-triphosphate = RNA(n+1) + diphosphate</text>
        <dbReference type="Rhea" id="RHEA:21248"/>
        <dbReference type="Rhea" id="RHEA-COMP:14527"/>
        <dbReference type="Rhea" id="RHEA-COMP:17342"/>
        <dbReference type="ChEBI" id="CHEBI:33019"/>
        <dbReference type="ChEBI" id="CHEBI:61557"/>
        <dbReference type="ChEBI" id="CHEBI:140395"/>
        <dbReference type="EC" id="2.7.7.6"/>
    </reaction>
</comment>
<comment type="subunit">
    <text evidence="1">The RNAP catalytic core consists of 2 alpha, 1 beta, 1 beta' and 1 omega subunit. When a sigma factor is associated with the core the holoenzyme is formed, which can initiate transcription.</text>
</comment>
<comment type="similarity">
    <text evidence="1">Belongs to the RNA polymerase subunit omega family.</text>
</comment>
<name>RPOZ_SERP5</name>
<evidence type="ECO:0000255" key="1">
    <source>
        <dbReference type="HAMAP-Rule" id="MF_00366"/>
    </source>
</evidence>
<organism>
    <name type="scientific">Serratia proteamaculans (strain 568)</name>
    <dbReference type="NCBI Taxonomy" id="399741"/>
    <lineage>
        <taxon>Bacteria</taxon>
        <taxon>Pseudomonadati</taxon>
        <taxon>Pseudomonadota</taxon>
        <taxon>Gammaproteobacteria</taxon>
        <taxon>Enterobacterales</taxon>
        <taxon>Yersiniaceae</taxon>
        <taxon>Serratia</taxon>
    </lineage>
</organism>
<feature type="chain" id="PRO_1000059913" description="DNA-directed RNA polymerase subunit omega">
    <location>
        <begin position="1"/>
        <end position="91"/>
    </location>
</feature>
<reference key="1">
    <citation type="submission" date="2007-09" db="EMBL/GenBank/DDBJ databases">
        <title>Complete sequence of chromosome of Serratia proteamaculans 568.</title>
        <authorList>
            <consortium name="US DOE Joint Genome Institute"/>
            <person name="Copeland A."/>
            <person name="Lucas S."/>
            <person name="Lapidus A."/>
            <person name="Barry K."/>
            <person name="Glavina del Rio T."/>
            <person name="Dalin E."/>
            <person name="Tice H."/>
            <person name="Pitluck S."/>
            <person name="Chain P."/>
            <person name="Malfatti S."/>
            <person name="Shin M."/>
            <person name="Vergez L."/>
            <person name="Schmutz J."/>
            <person name="Larimer F."/>
            <person name="Land M."/>
            <person name="Hauser L."/>
            <person name="Kyrpides N."/>
            <person name="Kim E."/>
            <person name="Taghavi S."/>
            <person name="Newman L."/>
            <person name="Vangronsveld J."/>
            <person name="van der Lelie D."/>
            <person name="Richardson P."/>
        </authorList>
    </citation>
    <scope>NUCLEOTIDE SEQUENCE [LARGE SCALE GENOMIC DNA]</scope>
    <source>
        <strain>568</strain>
    </source>
</reference>
<gene>
    <name evidence="1" type="primary">rpoZ</name>
    <name type="ordered locus">Spro_4868</name>
</gene>